<name>NEMP_DROME</name>
<organism evidence="9">
    <name type="scientific">Drosophila melanogaster</name>
    <name type="common">Fruit fly</name>
    <dbReference type="NCBI Taxonomy" id="7227"/>
    <lineage>
        <taxon>Eukaryota</taxon>
        <taxon>Metazoa</taxon>
        <taxon>Ecdysozoa</taxon>
        <taxon>Arthropoda</taxon>
        <taxon>Hexapoda</taxon>
        <taxon>Insecta</taxon>
        <taxon>Pterygota</taxon>
        <taxon>Neoptera</taxon>
        <taxon>Endopterygota</taxon>
        <taxon>Diptera</taxon>
        <taxon>Brachycera</taxon>
        <taxon>Muscomorpha</taxon>
        <taxon>Ephydroidea</taxon>
        <taxon>Drosophilidae</taxon>
        <taxon>Drosophila</taxon>
        <taxon>Sophophora</taxon>
    </lineage>
</organism>
<gene>
    <name evidence="8" type="primary">Nemp</name>
    <name evidence="8" type="ORF">CG9723</name>
</gene>
<comment type="function">
    <text evidence="5">Contributes to nuclear envelope stiffness in germ cells (PubMed:32923640). Required for male and female fertility (PubMed:32923640).</text>
</comment>
<comment type="subunit">
    <text evidence="5">Interacts with OTE.</text>
</comment>
<comment type="subcellular location">
    <subcellularLocation>
        <location evidence="5">Nucleus inner membrane</location>
        <topology evidence="2">Multi-pass membrane protein</topology>
        <orientation evidence="1">Nucleoplasmic side</orientation>
    </subcellularLocation>
</comment>
<comment type="tissue specificity">
    <text evidence="5">Expressed in both germline and somatic cells in the larval testis and prepupal ovary (at protein level) (PubMed:32923640). Also detected in the larval eye and larval wing disk (at protein level) (PubMed:32923640).</text>
</comment>
<comment type="disruption phenotype">
    <text evidence="5">~40% pupal lethality (PubMed:32923640). Male and female sterility with males showing extremely small testes and females showing extremely small ovaries (PubMed:32923640). Somatic and germline cells initiate differentiation but subsequent development is disrupted (PubMed:32923640). Adult testes contain spermatocytes but rarely contain elongated haploid spermatids (PubMed:32923640). In ovaries, most of the germline cells degenerate at the prepupal stage and the remaining germline cells do not complete oogenesis (PubMed:32923640). Defects in nuclear shape due to a markedly distorted nuclear envelope which is highly convoluted with regions of blebbing and deep invaginations (PubMed:32923640).</text>
</comment>
<comment type="similarity">
    <text evidence="6">Belongs to the NEMP family.</text>
</comment>
<feature type="signal peptide" evidence="2">
    <location>
        <begin position="1"/>
        <end position="18"/>
    </location>
</feature>
<feature type="chain" id="PRO_5015100773" description="Nuclear envelope integral membrane protein" evidence="2">
    <location>
        <begin position="19"/>
        <end position="454"/>
    </location>
</feature>
<feature type="transmembrane region" description="Helical" evidence="2">
    <location>
        <begin position="138"/>
        <end position="158"/>
    </location>
</feature>
<feature type="transmembrane region" description="Helical" evidence="2">
    <location>
        <begin position="166"/>
        <end position="186"/>
    </location>
</feature>
<feature type="transmembrane region" description="Helical" evidence="2">
    <location>
        <begin position="197"/>
        <end position="217"/>
    </location>
</feature>
<feature type="transmembrane region" description="Helical" evidence="2">
    <location>
        <begin position="231"/>
        <end position="251"/>
    </location>
</feature>
<feature type="transmembrane region" description="Helical" evidence="2">
    <location>
        <begin position="280"/>
        <end position="300"/>
    </location>
</feature>
<feature type="region of interest" description="Disordered" evidence="4">
    <location>
        <begin position="388"/>
        <end position="454"/>
    </location>
</feature>
<feature type="compositionally biased region" description="Acidic residues" evidence="4">
    <location>
        <begin position="388"/>
        <end position="405"/>
    </location>
</feature>
<feature type="compositionally biased region" description="Polar residues" evidence="4">
    <location>
        <begin position="414"/>
        <end position="424"/>
    </location>
</feature>
<feature type="compositionally biased region" description="Acidic residues" evidence="4">
    <location>
        <begin position="428"/>
        <end position="446"/>
    </location>
</feature>
<feature type="glycosylation site" description="N-linked (GlcNAc...) asparagine" evidence="3">
    <location>
        <position position="38"/>
    </location>
</feature>
<proteinExistence type="evidence at protein level"/>
<reference evidence="9" key="1">
    <citation type="journal article" date="2000" name="Science">
        <title>The genome sequence of Drosophila melanogaster.</title>
        <authorList>
            <person name="Adams M.D."/>
            <person name="Celniker S.E."/>
            <person name="Holt R.A."/>
            <person name="Evans C.A."/>
            <person name="Gocayne J.D."/>
            <person name="Amanatides P.G."/>
            <person name="Scherer S.E."/>
            <person name="Li P.W."/>
            <person name="Hoskins R.A."/>
            <person name="Galle R.F."/>
            <person name="George R.A."/>
            <person name="Lewis S.E."/>
            <person name="Richards S."/>
            <person name="Ashburner M."/>
            <person name="Henderson S.N."/>
            <person name="Sutton G.G."/>
            <person name="Wortman J.R."/>
            <person name="Yandell M.D."/>
            <person name="Zhang Q."/>
            <person name="Chen L.X."/>
            <person name="Brandon R.C."/>
            <person name="Rogers Y.-H.C."/>
            <person name="Blazej R.G."/>
            <person name="Champe M."/>
            <person name="Pfeiffer B.D."/>
            <person name="Wan K.H."/>
            <person name="Doyle C."/>
            <person name="Baxter E.G."/>
            <person name="Helt G."/>
            <person name="Nelson C.R."/>
            <person name="Miklos G.L.G."/>
            <person name="Abril J.F."/>
            <person name="Agbayani A."/>
            <person name="An H.-J."/>
            <person name="Andrews-Pfannkoch C."/>
            <person name="Baldwin D."/>
            <person name="Ballew R.M."/>
            <person name="Basu A."/>
            <person name="Baxendale J."/>
            <person name="Bayraktaroglu L."/>
            <person name="Beasley E.M."/>
            <person name="Beeson K.Y."/>
            <person name="Benos P.V."/>
            <person name="Berman B.P."/>
            <person name="Bhandari D."/>
            <person name="Bolshakov S."/>
            <person name="Borkova D."/>
            <person name="Botchan M.R."/>
            <person name="Bouck J."/>
            <person name="Brokstein P."/>
            <person name="Brottier P."/>
            <person name="Burtis K.C."/>
            <person name="Busam D.A."/>
            <person name="Butler H."/>
            <person name="Cadieu E."/>
            <person name="Center A."/>
            <person name="Chandra I."/>
            <person name="Cherry J.M."/>
            <person name="Cawley S."/>
            <person name="Dahlke C."/>
            <person name="Davenport L.B."/>
            <person name="Davies P."/>
            <person name="de Pablos B."/>
            <person name="Delcher A."/>
            <person name="Deng Z."/>
            <person name="Mays A.D."/>
            <person name="Dew I."/>
            <person name="Dietz S.M."/>
            <person name="Dodson K."/>
            <person name="Doup L.E."/>
            <person name="Downes M."/>
            <person name="Dugan-Rocha S."/>
            <person name="Dunkov B.C."/>
            <person name="Dunn P."/>
            <person name="Durbin K.J."/>
            <person name="Evangelista C.C."/>
            <person name="Ferraz C."/>
            <person name="Ferriera S."/>
            <person name="Fleischmann W."/>
            <person name="Fosler C."/>
            <person name="Gabrielian A.E."/>
            <person name="Garg N.S."/>
            <person name="Gelbart W.M."/>
            <person name="Glasser K."/>
            <person name="Glodek A."/>
            <person name="Gong F."/>
            <person name="Gorrell J.H."/>
            <person name="Gu Z."/>
            <person name="Guan P."/>
            <person name="Harris M."/>
            <person name="Harris N.L."/>
            <person name="Harvey D.A."/>
            <person name="Heiman T.J."/>
            <person name="Hernandez J.R."/>
            <person name="Houck J."/>
            <person name="Hostin D."/>
            <person name="Houston K.A."/>
            <person name="Howland T.J."/>
            <person name="Wei M.-H."/>
            <person name="Ibegwam C."/>
            <person name="Jalali M."/>
            <person name="Kalush F."/>
            <person name="Karpen G.H."/>
            <person name="Ke Z."/>
            <person name="Kennison J.A."/>
            <person name="Ketchum K.A."/>
            <person name="Kimmel B.E."/>
            <person name="Kodira C.D."/>
            <person name="Kraft C.L."/>
            <person name="Kravitz S."/>
            <person name="Kulp D."/>
            <person name="Lai Z."/>
            <person name="Lasko P."/>
            <person name="Lei Y."/>
            <person name="Levitsky A.A."/>
            <person name="Li J.H."/>
            <person name="Li Z."/>
            <person name="Liang Y."/>
            <person name="Lin X."/>
            <person name="Liu X."/>
            <person name="Mattei B."/>
            <person name="McIntosh T.C."/>
            <person name="McLeod M.P."/>
            <person name="McPherson D."/>
            <person name="Merkulov G."/>
            <person name="Milshina N.V."/>
            <person name="Mobarry C."/>
            <person name="Morris J."/>
            <person name="Moshrefi A."/>
            <person name="Mount S.M."/>
            <person name="Moy M."/>
            <person name="Murphy B."/>
            <person name="Murphy L."/>
            <person name="Muzny D.M."/>
            <person name="Nelson D.L."/>
            <person name="Nelson D.R."/>
            <person name="Nelson K.A."/>
            <person name="Nixon K."/>
            <person name="Nusskern D.R."/>
            <person name="Pacleb J.M."/>
            <person name="Palazzolo M."/>
            <person name="Pittman G.S."/>
            <person name="Pan S."/>
            <person name="Pollard J."/>
            <person name="Puri V."/>
            <person name="Reese M.G."/>
            <person name="Reinert K."/>
            <person name="Remington K."/>
            <person name="Saunders R.D.C."/>
            <person name="Scheeler F."/>
            <person name="Shen H."/>
            <person name="Shue B.C."/>
            <person name="Siden-Kiamos I."/>
            <person name="Simpson M."/>
            <person name="Skupski M.P."/>
            <person name="Smith T.J."/>
            <person name="Spier E."/>
            <person name="Spradling A.C."/>
            <person name="Stapleton M."/>
            <person name="Strong R."/>
            <person name="Sun E."/>
            <person name="Svirskas R."/>
            <person name="Tector C."/>
            <person name="Turner R."/>
            <person name="Venter E."/>
            <person name="Wang A.H."/>
            <person name="Wang X."/>
            <person name="Wang Z.-Y."/>
            <person name="Wassarman D.A."/>
            <person name="Weinstock G.M."/>
            <person name="Weissenbach J."/>
            <person name="Williams S.M."/>
            <person name="Woodage T."/>
            <person name="Worley K.C."/>
            <person name="Wu D."/>
            <person name="Yang S."/>
            <person name="Yao Q.A."/>
            <person name="Ye J."/>
            <person name="Yeh R.-F."/>
            <person name="Zaveri J.S."/>
            <person name="Zhan M."/>
            <person name="Zhang G."/>
            <person name="Zhao Q."/>
            <person name="Zheng L."/>
            <person name="Zheng X.H."/>
            <person name="Zhong F.N."/>
            <person name="Zhong W."/>
            <person name="Zhou X."/>
            <person name="Zhu S.C."/>
            <person name="Zhu X."/>
            <person name="Smith H.O."/>
            <person name="Gibbs R.A."/>
            <person name="Myers E.W."/>
            <person name="Rubin G.M."/>
            <person name="Venter J.C."/>
        </authorList>
    </citation>
    <scope>NUCLEOTIDE SEQUENCE [LARGE SCALE GENOMIC DNA]</scope>
    <source>
        <strain evidence="9">Berkeley</strain>
    </source>
</reference>
<reference evidence="9" key="2">
    <citation type="journal article" date="2002" name="Genome Biol.">
        <title>Annotation of the Drosophila melanogaster euchromatic genome: a systematic review.</title>
        <authorList>
            <person name="Misra S."/>
            <person name="Crosby M.A."/>
            <person name="Mungall C.J."/>
            <person name="Matthews B.B."/>
            <person name="Campbell K.S."/>
            <person name="Hradecky P."/>
            <person name="Huang Y."/>
            <person name="Kaminker J.S."/>
            <person name="Millburn G.H."/>
            <person name="Prochnik S.E."/>
            <person name="Smith C.D."/>
            <person name="Tupy J.L."/>
            <person name="Whitfield E.J."/>
            <person name="Bayraktaroglu L."/>
            <person name="Berman B.P."/>
            <person name="Bettencourt B.R."/>
            <person name="Celniker S.E."/>
            <person name="de Grey A.D.N.J."/>
            <person name="Drysdale R.A."/>
            <person name="Harris N.L."/>
            <person name="Richter J."/>
            <person name="Russo S."/>
            <person name="Schroeder A.J."/>
            <person name="Shu S.Q."/>
            <person name="Stapleton M."/>
            <person name="Yamada C."/>
            <person name="Ashburner M."/>
            <person name="Gelbart W.M."/>
            <person name="Rubin G.M."/>
            <person name="Lewis S.E."/>
        </authorList>
    </citation>
    <scope>GENOME REANNOTATION</scope>
    <source>
        <strain evidence="9">Berkeley</strain>
    </source>
</reference>
<reference evidence="7" key="3">
    <citation type="journal article" date="2002" name="Genome Biol.">
        <title>A Drosophila full-length cDNA resource.</title>
        <authorList>
            <person name="Stapleton M."/>
            <person name="Carlson J.W."/>
            <person name="Brokstein P."/>
            <person name="Yu C."/>
            <person name="Champe M."/>
            <person name="George R.A."/>
            <person name="Guarin H."/>
            <person name="Kronmiller B."/>
            <person name="Pacleb J.M."/>
            <person name="Park S."/>
            <person name="Wan K.H."/>
            <person name="Rubin G.M."/>
            <person name="Celniker S.E."/>
        </authorList>
    </citation>
    <scope>NUCLEOTIDE SEQUENCE [LARGE SCALE MRNA]</scope>
    <source>
        <strain evidence="7">Berkeley</strain>
        <tissue evidence="7">Embryo</tissue>
    </source>
</reference>
<reference evidence="6" key="4">
    <citation type="journal article" date="2020" name="Sci. Adv.">
        <title>The NEMP family supports metazoan fertility and nuclear envelope stiffness.</title>
        <authorList>
            <person name="Tsatskis Y."/>
            <person name="Rosenfeld R."/>
            <person name="Pearson J.D."/>
            <person name="Boswell C."/>
            <person name="Qu Y."/>
            <person name="Kim K."/>
            <person name="Fabian L."/>
            <person name="Mohammad A."/>
            <person name="Wang X."/>
            <person name="Robson M.I."/>
            <person name="Krchma K."/>
            <person name="Wu J."/>
            <person name="Goncalves J."/>
            <person name="Hodzic D."/>
            <person name="Wu S."/>
            <person name="Potter D."/>
            <person name="Pelletier L."/>
            <person name="Dunham W.H."/>
            <person name="Gingras A.C."/>
            <person name="Sun Y."/>
            <person name="Meng J."/>
            <person name="Godt D."/>
            <person name="Schedl T."/>
            <person name="Ciruna B."/>
            <person name="Choi K."/>
            <person name="Perry J.R.B."/>
            <person name="Bremner R."/>
            <person name="Schirmer E.C."/>
            <person name="Brill J.A."/>
            <person name="Jurisicova A."/>
            <person name="McNeill H."/>
        </authorList>
    </citation>
    <scope>FUNCTION</scope>
    <scope>INTERACTION WITH OTE</scope>
    <scope>SUBCELLULAR LOCATION</scope>
    <scope>TISSUE SPECIFICITY</scope>
    <scope>DISRUPTION PHENOTYPE</scope>
</reference>
<dbReference type="EMBL" id="AE014298">
    <property type="protein sequence ID" value="AAF48638.1"/>
    <property type="molecule type" value="Genomic_DNA"/>
</dbReference>
<dbReference type="EMBL" id="AY069627">
    <property type="protein sequence ID" value="AAL39772.1"/>
    <property type="molecule type" value="mRNA"/>
</dbReference>
<dbReference type="RefSeq" id="NP_573142.1">
    <property type="nucleotide sequence ID" value="NM_132914.4"/>
</dbReference>
<dbReference type="FunCoup" id="Q9VXD6">
    <property type="interactions" value="1258"/>
</dbReference>
<dbReference type="IntAct" id="Q9VXD6">
    <property type="interactions" value="6"/>
</dbReference>
<dbReference type="STRING" id="7227.FBpp0074150"/>
<dbReference type="GlyGen" id="Q9VXD6">
    <property type="glycosylation" value="1 site"/>
</dbReference>
<dbReference type="PaxDb" id="7227-FBpp0074150"/>
<dbReference type="DNASU" id="32639"/>
<dbReference type="EnsemblMetazoa" id="FBtr0074376">
    <property type="protein sequence ID" value="FBpp0074150"/>
    <property type="gene ID" value="FBgn0030768"/>
</dbReference>
<dbReference type="GeneID" id="32639"/>
<dbReference type="KEGG" id="dme:Dmel_CG9723"/>
<dbReference type="UCSC" id="CG9723-RA">
    <property type="organism name" value="d. melanogaster"/>
</dbReference>
<dbReference type="AGR" id="FB:FBgn0030768"/>
<dbReference type="CTD" id="32639"/>
<dbReference type="FlyBase" id="FBgn0030768">
    <property type="gene designation" value="Nemp"/>
</dbReference>
<dbReference type="VEuPathDB" id="VectorBase:FBgn0030768"/>
<dbReference type="eggNOG" id="KOG3817">
    <property type="taxonomic scope" value="Eukaryota"/>
</dbReference>
<dbReference type="GeneTree" id="ENSGT00390000002174"/>
<dbReference type="HOGENOM" id="CLU_025225_2_0_1"/>
<dbReference type="InParanoid" id="Q9VXD6"/>
<dbReference type="OMA" id="SPECKQW"/>
<dbReference type="OrthoDB" id="509138at2759"/>
<dbReference type="BioGRID-ORCS" id="32639">
    <property type="hits" value="0 hits in 3 CRISPR screens"/>
</dbReference>
<dbReference type="GenomeRNAi" id="32639"/>
<dbReference type="PRO" id="PR:Q9VXD6"/>
<dbReference type="Proteomes" id="UP000000803">
    <property type="component" value="Chromosome X"/>
</dbReference>
<dbReference type="Bgee" id="FBgn0030768">
    <property type="expression patterns" value="Expressed in egg chamber and 66 other cell types or tissues"/>
</dbReference>
<dbReference type="ExpressionAtlas" id="Q9VXD6">
    <property type="expression patterns" value="baseline and differential"/>
</dbReference>
<dbReference type="GO" id="GO:0005635">
    <property type="term" value="C:nuclear envelope"/>
    <property type="evidence" value="ECO:0000318"/>
    <property type="project" value="GO_Central"/>
</dbReference>
<dbReference type="GO" id="GO:0005637">
    <property type="term" value="C:nuclear inner membrane"/>
    <property type="evidence" value="ECO:0000314"/>
    <property type="project" value="FlyBase"/>
</dbReference>
<dbReference type="GO" id="GO:0071763">
    <property type="term" value="P:nuclear membrane organization"/>
    <property type="evidence" value="ECO:0000315"/>
    <property type="project" value="FlyBase"/>
</dbReference>
<dbReference type="InterPro" id="IPR019358">
    <property type="entry name" value="NEMP_fam"/>
</dbReference>
<dbReference type="PANTHER" id="PTHR13598">
    <property type="entry name" value="AT07567P-RELATED"/>
    <property type="match status" value="1"/>
</dbReference>
<dbReference type="PANTHER" id="PTHR13598:SF1">
    <property type="entry name" value="AT07567P-RELATED"/>
    <property type="match status" value="1"/>
</dbReference>
<dbReference type="Pfam" id="PF10225">
    <property type="entry name" value="NEMP"/>
    <property type="match status" value="1"/>
</dbReference>
<accession>Q9VXD6</accession>
<evidence type="ECO:0000250" key="1">
    <source>
        <dbReference type="UniProtKB" id="B9X187"/>
    </source>
</evidence>
<evidence type="ECO:0000255" key="2"/>
<evidence type="ECO:0000255" key="3">
    <source>
        <dbReference type="PROSITE-ProRule" id="PRU00498"/>
    </source>
</evidence>
<evidence type="ECO:0000256" key="4">
    <source>
        <dbReference type="SAM" id="MobiDB-lite"/>
    </source>
</evidence>
<evidence type="ECO:0000269" key="5">
    <source>
    </source>
</evidence>
<evidence type="ECO:0000305" key="6"/>
<evidence type="ECO:0000312" key="7">
    <source>
        <dbReference type="EMBL" id="AAL39772.1"/>
    </source>
</evidence>
<evidence type="ECO:0000312" key="8">
    <source>
        <dbReference type="FlyBase" id="FBgn0030768"/>
    </source>
</evidence>
<evidence type="ECO:0000312" key="9">
    <source>
        <dbReference type="Proteomes" id="UP000000803"/>
    </source>
</evidence>
<protein>
    <recommendedName>
        <fullName evidence="8">Nuclear envelope integral membrane protein</fullName>
    </recommendedName>
</protein>
<keyword id="KW-0325">Glycoprotein</keyword>
<keyword id="KW-0472">Membrane</keyword>
<keyword id="KW-0539">Nucleus</keyword>
<keyword id="KW-1185">Reference proteome</keyword>
<keyword id="KW-0732">Signal</keyword>
<keyword id="KW-0812">Transmembrane</keyword>
<keyword id="KW-1133">Transmembrane helix</keyword>
<sequence>MHSAGLLMLTVAGYFTSGIPGNTASSDVAYLTPGTYINLSENILGLQTLRTFCYPGKRLTVSSLFETVEFVLAIGSDDYSQYGGKTPEEVLQHYKDKQSLFSITLFAQKRQLLQLSPFEQQCIGISSRQAYTVILNSIPLDLWRLAQFAVGILILFSARRLAKNSVFYYLVGIVIGICASLLVVIYLAAKLFPRRTMMYGVLIGGWTIGFYVIKQLADNLRLILITYRDHVLGYLVITGLISFLICYRIGPPKNPRSQTIVMWVLQAIGAVMAYFSSWHTSAVIFIMVLVFVAHYFPISWTNQIKFMYRRRFPLKRRMLTQEEYEQQTAVETSKSLADLRKYVNSPECKQWAVMGKLRDPLRFASFANGAPHLDDEEIEDHSRTIEESMDAAPEEESVEEPEEDKPAELLPLPNSQFRYQQAARNSEPEPESESDDSEEEEFFEQEVDLRQVVQ</sequence>